<protein>
    <recommendedName>
        <fullName evidence="1">Photosystem II reaction center protein L</fullName>
        <shortName evidence="1">PSII-L</shortName>
    </recommendedName>
</protein>
<organism>
    <name type="scientific">Synechococcus sp. (strain JA-2-3B'a(2-13))</name>
    <name type="common">Cyanobacteria bacterium Yellowstone B-Prime</name>
    <dbReference type="NCBI Taxonomy" id="321332"/>
    <lineage>
        <taxon>Bacteria</taxon>
        <taxon>Bacillati</taxon>
        <taxon>Cyanobacteriota</taxon>
        <taxon>Cyanophyceae</taxon>
        <taxon>Synechococcales</taxon>
        <taxon>Synechococcaceae</taxon>
        <taxon>Synechococcus</taxon>
    </lineage>
</organism>
<keyword id="KW-0472">Membrane</keyword>
<keyword id="KW-0602">Photosynthesis</keyword>
<keyword id="KW-0604">Photosystem II</keyword>
<keyword id="KW-0674">Reaction center</keyword>
<keyword id="KW-1185">Reference proteome</keyword>
<keyword id="KW-0793">Thylakoid</keyword>
<keyword id="KW-0812">Transmembrane</keyword>
<keyword id="KW-1133">Transmembrane helix</keyword>
<dbReference type="EMBL" id="CP000240">
    <property type="protein sequence ID" value="ABD02463.1"/>
    <property type="molecule type" value="Genomic_DNA"/>
</dbReference>
<dbReference type="RefSeq" id="WP_011433111.1">
    <property type="nucleotide sequence ID" value="NC_007776.1"/>
</dbReference>
<dbReference type="SMR" id="Q2JLE8"/>
<dbReference type="STRING" id="321332.CYB_1497"/>
<dbReference type="KEGG" id="cyb:CYB_1497"/>
<dbReference type="eggNOG" id="ENOG5033AKP">
    <property type="taxonomic scope" value="Bacteria"/>
</dbReference>
<dbReference type="HOGENOM" id="CLU_214425_0_0_3"/>
<dbReference type="Proteomes" id="UP000001938">
    <property type="component" value="Chromosome"/>
</dbReference>
<dbReference type="GO" id="GO:0009539">
    <property type="term" value="C:photosystem II reaction center"/>
    <property type="evidence" value="ECO:0007669"/>
    <property type="project" value="InterPro"/>
</dbReference>
<dbReference type="GO" id="GO:0031676">
    <property type="term" value="C:plasma membrane-derived thylakoid membrane"/>
    <property type="evidence" value="ECO:0007669"/>
    <property type="project" value="UniProtKB-SubCell"/>
</dbReference>
<dbReference type="GO" id="GO:0015979">
    <property type="term" value="P:photosynthesis"/>
    <property type="evidence" value="ECO:0007669"/>
    <property type="project" value="UniProtKB-UniRule"/>
</dbReference>
<dbReference type="HAMAP" id="MF_01317">
    <property type="entry name" value="PSII_PsbL"/>
    <property type="match status" value="1"/>
</dbReference>
<dbReference type="InterPro" id="IPR003372">
    <property type="entry name" value="PSII_PsbL"/>
</dbReference>
<dbReference type="InterPro" id="IPR037266">
    <property type="entry name" value="PSII_PsbL_sf"/>
</dbReference>
<dbReference type="NCBIfam" id="NF001972">
    <property type="entry name" value="PRK00753.1"/>
    <property type="match status" value="1"/>
</dbReference>
<dbReference type="Pfam" id="PF02419">
    <property type="entry name" value="PsbL"/>
    <property type="match status" value="1"/>
</dbReference>
<dbReference type="SUPFAM" id="SSF161017">
    <property type="entry name" value="Photosystem II reaction center protein L, PsbL"/>
    <property type="match status" value="1"/>
</dbReference>
<reference key="1">
    <citation type="journal article" date="2007" name="ISME J.">
        <title>Population level functional diversity in a microbial community revealed by comparative genomic and metagenomic analyses.</title>
        <authorList>
            <person name="Bhaya D."/>
            <person name="Grossman A.R."/>
            <person name="Steunou A.-S."/>
            <person name="Khuri N."/>
            <person name="Cohan F.M."/>
            <person name="Hamamura N."/>
            <person name="Melendrez M.C."/>
            <person name="Bateson M.M."/>
            <person name="Ward D.M."/>
            <person name="Heidelberg J.F."/>
        </authorList>
    </citation>
    <scope>NUCLEOTIDE SEQUENCE [LARGE SCALE GENOMIC DNA]</scope>
    <source>
        <strain>JA-2-3B'a(2-13)</strain>
    </source>
</reference>
<feature type="chain" id="PRO_0000306214" description="Photosystem II reaction center protein L">
    <location>
        <begin position="1"/>
        <end position="41"/>
    </location>
</feature>
<feature type="transmembrane region" description="Helical" evidence="1">
    <location>
        <begin position="20"/>
        <end position="40"/>
    </location>
</feature>
<evidence type="ECO:0000255" key="1">
    <source>
        <dbReference type="HAMAP-Rule" id="MF_01317"/>
    </source>
</evidence>
<sequence length="41" mass="4656">MADQPERNPNSQPVELNRTSLYLGLLLVFVVGLLFSSYFLN</sequence>
<accession>Q2JLE8</accession>
<gene>
    <name evidence="1" type="primary">psbL</name>
    <name type="ordered locus">CYB_1497</name>
</gene>
<comment type="function">
    <text evidence="1">One of the components of the core complex of photosystem II (PSII). PSII is a light-driven water:plastoquinone oxidoreductase that uses light energy to abstract electrons from H(2)O, generating O(2) and a proton gradient subsequently used for ATP formation. It consists of a core antenna complex that captures photons, and an electron transfer chain that converts photonic excitation into a charge separation. This subunit is found at the monomer-monomer interface and is required for correct PSII assembly and/or dimerization.</text>
</comment>
<comment type="subunit">
    <text evidence="1">PSII is composed of 1 copy each of membrane proteins PsbA, PsbB, PsbC, PsbD, PsbE, PsbF, PsbH, PsbI, PsbJ, PsbK, PsbL, PsbM, PsbT, PsbX, PsbY, PsbZ, Psb30/Ycf12, peripheral proteins PsbO, CyanoQ (PsbQ), PsbU, PsbV and a large number of cofactors. It forms dimeric complexes.</text>
</comment>
<comment type="subcellular location">
    <subcellularLocation>
        <location evidence="1">Cellular thylakoid membrane</location>
        <topology evidence="1">Single-pass membrane protein</topology>
    </subcellularLocation>
</comment>
<comment type="similarity">
    <text evidence="1">Belongs to the PsbL family.</text>
</comment>
<name>PSBL_SYNJB</name>
<proteinExistence type="inferred from homology"/>